<organism>
    <name type="scientific">Saccharomyces cerevisiae (strain ATCC 204508 / S288c)</name>
    <name type="common">Baker's yeast</name>
    <dbReference type="NCBI Taxonomy" id="559292"/>
    <lineage>
        <taxon>Eukaryota</taxon>
        <taxon>Fungi</taxon>
        <taxon>Dikarya</taxon>
        <taxon>Ascomycota</taxon>
        <taxon>Saccharomycotina</taxon>
        <taxon>Saccharomycetes</taxon>
        <taxon>Saccharomycetales</taxon>
        <taxon>Saccharomycetaceae</taxon>
        <taxon>Saccharomyces</taxon>
    </lineage>
</organism>
<proteinExistence type="evidence at protein level"/>
<keyword id="KW-0002">3D-structure</keyword>
<keyword id="KW-0963">Cytoplasm</keyword>
<keyword id="KW-0479">Metal-binding</keyword>
<keyword id="KW-1185">Reference proteome</keyword>
<keyword id="KW-0808">Transferase</keyword>
<keyword id="KW-0833">Ubl conjugation pathway</keyword>
<keyword id="KW-0862">Zinc</keyword>
<keyword id="KW-0863">Zinc-finger</keyword>
<sequence length="421" mass="49169">MSELLDSFETEFAKFYTDSNLEETNLQKCLDHTHEFKSQLKKLKAHLNKHIQESKPEVYNKLSDKEKQKFKRKRELIIEKLSKSQRQWDHSVKKQIKYVSQQSNRFNKSTLNKLKEFDIDSVYVNKLPKETMENVNEAIGYHILRYSIDNMPLGNKNEAFQYLKDVYGITNKESTEFIEMGQIVHDLKKGDTESCLKWCSNEMESLSSNHTALSSLKFDLYTLSAMQIVKHGNPVELYYQITQNAPLDCFRHREKELMQNVVPLLTKSLIGQPIEDIDSKVNKELKECTSLFIKEYCAAKHIFFDSPLFLIVLSGLISFQFFIKYKTIRELAHVDWTTKDELPFDVKLPDFLTHFHPIFICPVLKEETTTENPPYSLACHHIISKKALDRLSKNGTITFKCPYCPVNTSMSSTKKVRFVML</sequence>
<protein>
    <recommendedName>
        <fullName evidence="15">E3 ubiquitin-protein ligase RMD5</fullName>
        <ecNumber evidence="6 16">2.3.2.27</ecNumber>
    </recommendedName>
    <alternativeName>
        <fullName>GID complex catalytic subunit 2</fullName>
    </alternativeName>
    <alternativeName>
        <fullName evidence="14">Glucose-induced degradation protein 2</fullName>
    </alternativeName>
    <alternativeName>
        <fullName evidence="13">Required for meiotic nuclear division protein 5</fullName>
    </alternativeName>
    <alternativeName>
        <fullName>Sporulation protein RMD5</fullName>
    </alternativeName>
</protein>
<comment type="function">
    <text evidence="4 6 8 9 10 12">E3 ubiquitin-protein ligase component of the GID E3 ligase complex recruiting N termini and catalyzing ubiquitination of proteins targeted for degradation. GID E3 is regulated through assembly with interchangeable N-degron-binding substrate receptors induced by distinct environmental perturbations (PubMed:18508925, PubMed:31708416). Required for the adaptation to the presence of glucose in the growth medium; mediates in association with the substrate receptor VID24/GID4 the degradation of enzymes involved in gluconeogenesis when cells are shifted to glucose-containing medium (PubMed:12686616, PubMed:18508925, PubMed:31708416, PubMed:9737955). Required for proteasome-dependent catabolite degradation of fructose-1,6-bisphosphatase (FBP1), malate dehydrogenase (MDH2), and other gluconeogenic enzymes (PubMed:12686616, PubMed:18508925, PubMed:22645139, PubMed:28126757, PubMed:9737955).</text>
</comment>
<comment type="catalytic activity">
    <reaction evidence="6 16">
        <text>S-ubiquitinyl-[E2 ubiquitin-conjugating enzyme]-L-cysteine + [acceptor protein]-L-lysine = [E2 ubiquitin-conjugating enzyme]-L-cysteine + N(6)-ubiquitinyl-[acceptor protein]-L-lysine.</text>
        <dbReference type="EC" id="2.3.2.27"/>
    </reaction>
</comment>
<comment type="pathway">
    <text evidence="4 6">Protein modification; protein ubiquitination.</text>
</comment>
<comment type="subunit">
    <text evidence="5 6 7 8 10 11">Identified in the GID/CTLH complex (PubMed:16872538, PubMed:18508925). In the absence of stress, the complex exists as an inactive anticipatory complex (GID(Ant)), composed of VID30/GID1, the E3 ubiquitin-ligase RMD5/GID2, VID28/GID5, GID8, and the RING-like subunit FYV10/GID9, awaiting a substrate receptor to form the active E3 ligase complex. When cells are shifted to glucose-containing medium, the substrate receptor VID24/GID4 is induced and becomes part of the complex, named GID(SR4) (PubMed:18508925, PubMed:22645139). Additionally, GID7 transforms the GID(SR4) E3 ligase core into a higher-order supramolecular assembly (Chelator-GID(SR4)) specifically tailored for FBP1 ubiquitination (PubMed:33905682). Under osmotic or heat stress, the substrate receptor GID10 is induced and becomes part of the complex, named GID(SR10) (PubMed:31708416). Within the GID complex, interacts directly with GID8, FYV10/GID9 and VID28/GID5 (PubMed:22044534, PubMed:22645139).</text>
</comment>
<comment type="interaction">
    <interactant intactId="EBI-38868">
        <id>Q12508</id>
    </interactant>
    <interactant intactId="EBI-25137">
        <id>P40492</id>
        <label>FYV10</label>
    </interactant>
    <organismsDiffer>false</organismsDiffer>
    <experiments>2</experiments>
</comment>
<comment type="interaction">
    <interactant intactId="EBI-38868">
        <id>Q12508</id>
    </interactant>
    <interactant intactId="EBI-24173">
        <id>P53076</id>
        <label>VID30</label>
    </interactant>
    <organismsDiffer>false</organismsDiffer>
    <experiments>9</experiments>
</comment>
<comment type="subcellular location">
    <subcellularLocation>
        <location evidence="4">Cytoplasm</location>
    </subcellularLocation>
</comment>
<comment type="disruption phenotype">
    <text evidence="3">Causes a severe sporulation defect, specifically for meiotic nuclear division.</text>
</comment>
<comment type="similarity">
    <text evidence="15">Belongs to the RMD5/GID2 family.</text>
</comment>
<evidence type="ECO:0000255" key="1">
    <source>
        <dbReference type="PROSITE-ProRule" id="PRU00058"/>
    </source>
</evidence>
<evidence type="ECO:0000255" key="2">
    <source>
        <dbReference type="PROSITE-ProRule" id="PRU01215"/>
    </source>
</evidence>
<evidence type="ECO:0000269" key="3">
    <source>
    </source>
</evidence>
<evidence type="ECO:0000269" key="4">
    <source>
    </source>
</evidence>
<evidence type="ECO:0000269" key="5">
    <source>
    </source>
</evidence>
<evidence type="ECO:0000269" key="6">
    <source>
    </source>
</evidence>
<evidence type="ECO:0000269" key="7">
    <source>
    </source>
</evidence>
<evidence type="ECO:0000269" key="8">
    <source>
    </source>
</evidence>
<evidence type="ECO:0000269" key="9">
    <source>
    </source>
</evidence>
<evidence type="ECO:0000269" key="10">
    <source>
    </source>
</evidence>
<evidence type="ECO:0000269" key="11">
    <source>
    </source>
</evidence>
<evidence type="ECO:0000269" key="12">
    <source>
    </source>
</evidence>
<evidence type="ECO:0000303" key="13">
    <source>
    </source>
</evidence>
<evidence type="ECO:0000303" key="14">
    <source>
    </source>
</evidence>
<evidence type="ECO:0000305" key="15"/>
<evidence type="ECO:0000305" key="16">
    <source>
    </source>
</evidence>
<evidence type="ECO:0000312" key="17">
    <source>
        <dbReference type="SGD" id="S000002663"/>
    </source>
</evidence>
<evidence type="ECO:0007744" key="18">
    <source>
        <dbReference type="PDB" id="7NS4"/>
    </source>
</evidence>
<evidence type="ECO:0007744" key="19">
    <source>
        <dbReference type="PDB" id="8PMQ"/>
    </source>
</evidence>
<gene>
    <name evidence="13" type="primary">RMD5</name>
    <name evidence="14" type="synonym">GID2</name>
    <name evidence="17" type="ordered locus">YDR255C</name>
    <name type="ORF">YD9320A.05c</name>
</gene>
<name>RMD5_YEAST</name>
<accession>Q12508</accession>
<accession>D6VSN5</accession>
<feature type="chain" id="PRO_0000097361" description="E3 ubiquitin-protein ligase RMD5">
    <location>
        <begin position="1"/>
        <end position="421"/>
    </location>
</feature>
<feature type="domain" description="CTLH" evidence="1">
    <location>
        <begin position="176"/>
        <end position="236"/>
    </location>
</feature>
<feature type="zinc finger region" description="RING-Gid-type" evidence="2">
    <location>
        <begin position="361"/>
        <end position="404"/>
    </location>
</feature>
<feature type="mutagenesis site" description="Abolishes FBP1 ubiquitination and degradation." evidence="6">
    <original>C</original>
    <variation>S</variation>
    <location>
        <position position="379"/>
    </location>
</feature>
<dbReference type="EC" id="2.3.2.27" evidence="6 16"/>
<dbReference type="EMBL" id="Z70202">
    <property type="protein sequence ID" value="CAA94094.1"/>
    <property type="molecule type" value="Genomic_DNA"/>
</dbReference>
<dbReference type="EMBL" id="Z68329">
    <property type="protein sequence ID" value="CAA92712.1"/>
    <property type="molecule type" value="Genomic_DNA"/>
</dbReference>
<dbReference type="EMBL" id="AY557796">
    <property type="protein sequence ID" value="AAS56122.1"/>
    <property type="molecule type" value="Genomic_DNA"/>
</dbReference>
<dbReference type="EMBL" id="BK006938">
    <property type="protein sequence ID" value="DAA12095.1"/>
    <property type="molecule type" value="Genomic_DNA"/>
</dbReference>
<dbReference type="PIR" id="S67312">
    <property type="entry name" value="S67312"/>
</dbReference>
<dbReference type="RefSeq" id="NP_010541.3">
    <property type="nucleotide sequence ID" value="NM_001180563.3"/>
</dbReference>
<dbReference type="PDB" id="7NS4">
    <property type="method" value="EM"/>
    <property type="resolution" value="3.90 A"/>
    <property type="chains" value="b=1-421"/>
</dbReference>
<dbReference type="PDB" id="8PMQ">
    <property type="method" value="EM"/>
    <property type="resolution" value="3.53 A"/>
    <property type="chains" value="2=1-421"/>
</dbReference>
<dbReference type="PDBsum" id="7NS4"/>
<dbReference type="PDBsum" id="8PMQ"/>
<dbReference type="EMDB" id="EMD-12560"/>
<dbReference type="EMDB" id="EMD-17764"/>
<dbReference type="SMR" id="Q12508"/>
<dbReference type="BioGRID" id="32305">
    <property type="interactions" value="91"/>
</dbReference>
<dbReference type="ComplexPortal" id="CPX-301">
    <property type="entry name" value="GID E3 ubiquitin ligase complex, GID4 variant"/>
</dbReference>
<dbReference type="ComplexPortal" id="CPX-7884">
    <property type="entry name" value="GID E3 ubiquitin ligase complex, GID10 variant"/>
</dbReference>
<dbReference type="ComplexPortal" id="CPX-7885">
    <property type="entry name" value="GID E3 ubiquitin ligase complex, GID11 variant"/>
</dbReference>
<dbReference type="DIP" id="DIP-1835N"/>
<dbReference type="FunCoup" id="Q12508">
    <property type="interactions" value="689"/>
</dbReference>
<dbReference type="IntAct" id="Q12508">
    <property type="interactions" value="10"/>
</dbReference>
<dbReference type="MINT" id="Q12508"/>
<dbReference type="STRING" id="4932.YDR255C"/>
<dbReference type="PaxDb" id="4932-YDR255C"/>
<dbReference type="PeptideAtlas" id="Q12508"/>
<dbReference type="TopDownProteomics" id="Q12508"/>
<dbReference type="EnsemblFungi" id="YDR255C_mRNA">
    <property type="protein sequence ID" value="YDR255C"/>
    <property type="gene ID" value="YDR255C"/>
</dbReference>
<dbReference type="GeneID" id="851842"/>
<dbReference type="KEGG" id="sce:YDR255C"/>
<dbReference type="AGR" id="SGD:S000002663"/>
<dbReference type="SGD" id="S000002663">
    <property type="gene designation" value="RMD5"/>
</dbReference>
<dbReference type="VEuPathDB" id="FungiDB:YDR255C"/>
<dbReference type="eggNOG" id="KOG2817">
    <property type="taxonomic scope" value="Eukaryota"/>
</dbReference>
<dbReference type="GeneTree" id="ENSGT00940000153203"/>
<dbReference type="HOGENOM" id="CLU_020227_2_0_1"/>
<dbReference type="InParanoid" id="Q12508"/>
<dbReference type="OMA" id="PYSLPCH"/>
<dbReference type="OrthoDB" id="1933281at2759"/>
<dbReference type="BioCyc" id="YEAST:G3O-29827-MONOMER"/>
<dbReference type="Reactome" id="R-SCE-9861718">
    <property type="pathway name" value="Regulation of pyruvate metabolism"/>
</dbReference>
<dbReference type="UniPathway" id="UPA00143"/>
<dbReference type="BioGRID-ORCS" id="851842">
    <property type="hits" value="1 hit in 10 CRISPR screens"/>
</dbReference>
<dbReference type="PRO" id="PR:Q12508"/>
<dbReference type="Proteomes" id="UP000002311">
    <property type="component" value="Chromosome IV"/>
</dbReference>
<dbReference type="RNAct" id="Q12508">
    <property type="molecule type" value="protein"/>
</dbReference>
<dbReference type="GO" id="GO:0005737">
    <property type="term" value="C:cytoplasm"/>
    <property type="evidence" value="ECO:0000318"/>
    <property type="project" value="GO_Central"/>
</dbReference>
<dbReference type="GO" id="GO:0005829">
    <property type="term" value="C:cytosol"/>
    <property type="evidence" value="ECO:0000314"/>
    <property type="project" value="SGD"/>
</dbReference>
<dbReference type="GO" id="GO:0034657">
    <property type="term" value="C:GID complex"/>
    <property type="evidence" value="ECO:0000314"/>
    <property type="project" value="SGD"/>
</dbReference>
<dbReference type="GO" id="GO:0005634">
    <property type="term" value="C:nucleus"/>
    <property type="evidence" value="ECO:0007005"/>
    <property type="project" value="SGD"/>
</dbReference>
<dbReference type="GO" id="GO:0005777">
    <property type="term" value="C:peroxisome"/>
    <property type="evidence" value="ECO:0000314"/>
    <property type="project" value="SGD"/>
</dbReference>
<dbReference type="GO" id="GO:0061630">
    <property type="term" value="F:ubiquitin protein ligase activity"/>
    <property type="evidence" value="ECO:0000314"/>
    <property type="project" value="SGD"/>
</dbReference>
<dbReference type="GO" id="GO:0008270">
    <property type="term" value="F:zinc ion binding"/>
    <property type="evidence" value="ECO:0007669"/>
    <property type="project" value="UniProtKB-KW"/>
</dbReference>
<dbReference type="GO" id="GO:0045721">
    <property type="term" value="P:negative regulation of gluconeogenesis"/>
    <property type="evidence" value="ECO:0000315"/>
    <property type="project" value="SGD"/>
</dbReference>
<dbReference type="GO" id="GO:0043161">
    <property type="term" value="P:proteasome-mediated ubiquitin-dependent protein catabolic process"/>
    <property type="evidence" value="ECO:0000315"/>
    <property type="project" value="SGD"/>
</dbReference>
<dbReference type="GO" id="GO:0016567">
    <property type="term" value="P:protein ubiquitination"/>
    <property type="evidence" value="ECO:0007669"/>
    <property type="project" value="UniProtKB-UniPathway"/>
</dbReference>
<dbReference type="GO" id="GO:0006511">
    <property type="term" value="P:ubiquitin-dependent protein catabolic process"/>
    <property type="evidence" value="ECO:0000315"/>
    <property type="project" value="SGD"/>
</dbReference>
<dbReference type="CDD" id="cd16652">
    <property type="entry name" value="dRING_Rmd5p-like"/>
    <property type="match status" value="1"/>
</dbReference>
<dbReference type="FunFam" id="3.30.40.10:FF:000143">
    <property type="entry name" value="Regulator of gluconeogenesis Rmd5"/>
    <property type="match status" value="1"/>
</dbReference>
<dbReference type="Gene3D" id="3.30.40.10">
    <property type="entry name" value="Zinc/RING finger domain, C3HC4 (zinc finger)"/>
    <property type="match status" value="1"/>
</dbReference>
<dbReference type="InterPro" id="IPR024964">
    <property type="entry name" value="CTLH/CRA"/>
</dbReference>
<dbReference type="InterPro" id="IPR006595">
    <property type="entry name" value="CTLH_C"/>
</dbReference>
<dbReference type="InterPro" id="IPR045098">
    <property type="entry name" value="Fyv10_fam"/>
</dbReference>
<dbReference type="InterPro" id="IPR037683">
    <property type="entry name" value="Rmd5_dRing"/>
</dbReference>
<dbReference type="InterPro" id="IPR044063">
    <property type="entry name" value="ZF_RING_GID"/>
</dbReference>
<dbReference type="InterPro" id="IPR013083">
    <property type="entry name" value="Znf_RING/FYVE/PHD"/>
</dbReference>
<dbReference type="PANTHER" id="PTHR12170:SF3">
    <property type="entry name" value="GH10162P"/>
    <property type="match status" value="1"/>
</dbReference>
<dbReference type="PANTHER" id="PTHR12170">
    <property type="entry name" value="MACROPHAGE ERYTHROBLAST ATTACHER-RELATED"/>
    <property type="match status" value="1"/>
</dbReference>
<dbReference type="Pfam" id="PF10607">
    <property type="entry name" value="CTLH"/>
    <property type="match status" value="1"/>
</dbReference>
<dbReference type="SMART" id="SM00668">
    <property type="entry name" value="CTLH"/>
    <property type="match status" value="1"/>
</dbReference>
<dbReference type="SUPFAM" id="SSF57850">
    <property type="entry name" value="RING/U-box"/>
    <property type="match status" value="1"/>
</dbReference>
<dbReference type="PROSITE" id="PS50897">
    <property type="entry name" value="CTLH"/>
    <property type="match status" value="1"/>
</dbReference>
<dbReference type="PROSITE" id="PS51867">
    <property type="entry name" value="ZF_RING_GID"/>
    <property type="match status" value="1"/>
</dbReference>
<reference key="1">
    <citation type="journal article" date="1997" name="Nature">
        <title>The nucleotide sequence of Saccharomyces cerevisiae chromosome IV.</title>
        <authorList>
            <person name="Jacq C."/>
            <person name="Alt-Moerbe J."/>
            <person name="Andre B."/>
            <person name="Arnold W."/>
            <person name="Bahr A."/>
            <person name="Ballesta J.P.G."/>
            <person name="Bargues M."/>
            <person name="Baron L."/>
            <person name="Becker A."/>
            <person name="Biteau N."/>
            <person name="Bloecker H."/>
            <person name="Blugeon C."/>
            <person name="Boskovic J."/>
            <person name="Brandt P."/>
            <person name="Brueckner M."/>
            <person name="Buitrago M.J."/>
            <person name="Coster F."/>
            <person name="Delaveau T."/>
            <person name="del Rey F."/>
            <person name="Dujon B."/>
            <person name="Eide L.G."/>
            <person name="Garcia-Cantalejo J.M."/>
            <person name="Goffeau A."/>
            <person name="Gomez-Peris A."/>
            <person name="Granotier C."/>
            <person name="Hanemann V."/>
            <person name="Hankeln T."/>
            <person name="Hoheisel J.D."/>
            <person name="Jaeger W."/>
            <person name="Jimenez A."/>
            <person name="Jonniaux J.-L."/>
            <person name="Kraemer C."/>
            <person name="Kuester H."/>
            <person name="Laamanen P."/>
            <person name="Legros Y."/>
            <person name="Louis E.J."/>
            <person name="Moeller-Rieker S."/>
            <person name="Monnet A."/>
            <person name="Moro M."/>
            <person name="Mueller-Auer S."/>
            <person name="Nussbaumer B."/>
            <person name="Paricio N."/>
            <person name="Paulin L."/>
            <person name="Perea J."/>
            <person name="Perez-Alonso M."/>
            <person name="Perez-Ortin J.E."/>
            <person name="Pohl T.M."/>
            <person name="Prydz H."/>
            <person name="Purnelle B."/>
            <person name="Rasmussen S.W."/>
            <person name="Remacha M.A."/>
            <person name="Revuelta J.L."/>
            <person name="Rieger M."/>
            <person name="Salom D."/>
            <person name="Saluz H.P."/>
            <person name="Saiz J.E."/>
            <person name="Saren A.-M."/>
            <person name="Schaefer M."/>
            <person name="Scharfe M."/>
            <person name="Schmidt E.R."/>
            <person name="Schneider C."/>
            <person name="Scholler P."/>
            <person name="Schwarz S."/>
            <person name="Soler-Mira A."/>
            <person name="Urrestarazu L.A."/>
            <person name="Verhasselt P."/>
            <person name="Vissers S."/>
            <person name="Voet M."/>
            <person name="Volckaert G."/>
            <person name="Wagner G."/>
            <person name="Wambutt R."/>
            <person name="Wedler E."/>
            <person name="Wedler H."/>
            <person name="Woelfl S."/>
            <person name="Harris D.E."/>
            <person name="Bowman S."/>
            <person name="Brown D."/>
            <person name="Churcher C.M."/>
            <person name="Connor R."/>
            <person name="Dedman K."/>
            <person name="Gentles S."/>
            <person name="Hamlin N."/>
            <person name="Hunt S."/>
            <person name="Jones L."/>
            <person name="McDonald S."/>
            <person name="Murphy L.D."/>
            <person name="Niblett D."/>
            <person name="Odell C."/>
            <person name="Oliver K."/>
            <person name="Rajandream M.A."/>
            <person name="Richards C."/>
            <person name="Shore L."/>
            <person name="Walsh S.V."/>
            <person name="Barrell B.G."/>
            <person name="Dietrich F.S."/>
            <person name="Mulligan J.T."/>
            <person name="Allen E."/>
            <person name="Araujo R."/>
            <person name="Aviles E."/>
            <person name="Berno A."/>
            <person name="Carpenter J."/>
            <person name="Chen E."/>
            <person name="Cherry J.M."/>
            <person name="Chung E."/>
            <person name="Duncan M."/>
            <person name="Hunicke-Smith S."/>
            <person name="Hyman R.W."/>
            <person name="Komp C."/>
            <person name="Lashkari D."/>
            <person name="Lew H."/>
            <person name="Lin D."/>
            <person name="Mosedale D."/>
            <person name="Nakahara K."/>
            <person name="Namath A."/>
            <person name="Oefner P."/>
            <person name="Oh C."/>
            <person name="Petel F.X."/>
            <person name="Roberts D."/>
            <person name="Schramm S."/>
            <person name="Schroeder M."/>
            <person name="Shogren T."/>
            <person name="Shroff N."/>
            <person name="Winant A."/>
            <person name="Yelton M.A."/>
            <person name="Botstein D."/>
            <person name="Davis R.W."/>
            <person name="Johnston M."/>
            <person name="Andrews S."/>
            <person name="Brinkman R."/>
            <person name="Cooper J."/>
            <person name="Ding H."/>
            <person name="Du Z."/>
            <person name="Favello A."/>
            <person name="Fulton L."/>
            <person name="Gattung S."/>
            <person name="Greco T."/>
            <person name="Hallsworth K."/>
            <person name="Hawkins J."/>
            <person name="Hillier L.W."/>
            <person name="Jier M."/>
            <person name="Johnson D."/>
            <person name="Johnston L."/>
            <person name="Kirsten J."/>
            <person name="Kucaba T."/>
            <person name="Langston Y."/>
            <person name="Latreille P."/>
            <person name="Le T."/>
            <person name="Mardis E."/>
            <person name="Menezes S."/>
            <person name="Miller N."/>
            <person name="Nhan M."/>
            <person name="Pauley A."/>
            <person name="Peluso D."/>
            <person name="Rifkin L."/>
            <person name="Riles L."/>
            <person name="Taich A."/>
            <person name="Trevaskis E."/>
            <person name="Vignati D."/>
            <person name="Wilcox L."/>
            <person name="Wohldman P."/>
            <person name="Vaudin M."/>
            <person name="Wilson R."/>
            <person name="Waterston R."/>
            <person name="Albermann K."/>
            <person name="Hani J."/>
            <person name="Heumann K."/>
            <person name="Kleine K."/>
            <person name="Mewes H.-W."/>
            <person name="Zollner A."/>
            <person name="Zaccaria P."/>
        </authorList>
    </citation>
    <scope>NUCLEOTIDE SEQUENCE [LARGE SCALE GENOMIC DNA]</scope>
    <source>
        <strain>ATCC 204508 / S288c</strain>
    </source>
</reference>
<reference key="2">
    <citation type="journal article" date="2014" name="G3 (Bethesda)">
        <title>The reference genome sequence of Saccharomyces cerevisiae: Then and now.</title>
        <authorList>
            <person name="Engel S.R."/>
            <person name="Dietrich F.S."/>
            <person name="Fisk D.G."/>
            <person name="Binkley G."/>
            <person name="Balakrishnan R."/>
            <person name="Costanzo M.C."/>
            <person name="Dwight S.S."/>
            <person name="Hitz B.C."/>
            <person name="Karra K."/>
            <person name="Nash R.S."/>
            <person name="Weng S."/>
            <person name="Wong E.D."/>
            <person name="Lloyd P."/>
            <person name="Skrzypek M.S."/>
            <person name="Miyasato S.R."/>
            <person name="Simison M."/>
            <person name="Cherry J.M."/>
        </authorList>
    </citation>
    <scope>GENOME REANNOTATION</scope>
    <source>
        <strain>ATCC 204508 / S288c</strain>
    </source>
</reference>
<reference key="3">
    <citation type="journal article" date="2007" name="Genome Res.">
        <title>Approaching a complete repository of sequence-verified protein-encoding clones for Saccharomyces cerevisiae.</title>
        <authorList>
            <person name="Hu Y."/>
            <person name="Rolfs A."/>
            <person name="Bhullar B."/>
            <person name="Murthy T.V.S."/>
            <person name="Zhu C."/>
            <person name="Berger M.F."/>
            <person name="Camargo A.A."/>
            <person name="Kelley F."/>
            <person name="McCarron S."/>
            <person name="Jepson D."/>
            <person name="Richardson A."/>
            <person name="Raphael J."/>
            <person name="Moreira D."/>
            <person name="Taycher E."/>
            <person name="Zuo D."/>
            <person name="Mohr S."/>
            <person name="Kane M.F."/>
            <person name="Williamson J."/>
            <person name="Simpson A.J.G."/>
            <person name="Bulyk M.L."/>
            <person name="Harlow E."/>
            <person name="Marsischky G."/>
            <person name="Kolodner R.D."/>
            <person name="LaBaer J."/>
        </authorList>
    </citation>
    <scope>NUCLEOTIDE SEQUENCE [GENOMIC DNA]</scope>
    <source>
        <strain>ATCC 204508 / S288c</strain>
    </source>
</reference>
<reference key="4">
    <citation type="journal article" date="1998" name="J. Biol. Chem.">
        <title>Proteins of newly isolated mutants and the amino-terminal proline are essential for ubiquitin-proteasome-catalyzed catabolite degradation of fructose-1,6-bisphosphatase of Saccharomyces cerevisiae.</title>
        <authorList>
            <person name="Haemmerle M."/>
            <person name="Bauer J."/>
            <person name="Rose M."/>
            <person name="Szallies A."/>
            <person name="Thumm M."/>
            <person name="Duesterhus S."/>
            <person name="Mecke D."/>
            <person name="Entian K.D."/>
            <person name="Wolf D.H."/>
        </authorList>
    </citation>
    <scope>FUNCTION</scope>
</reference>
<reference key="5">
    <citation type="journal article" date="2003" name="Genetics">
        <title>Large-scale functional genomic analysis of sporulation and meiosis in Saccharomyces cerevisiae.</title>
        <authorList>
            <person name="Enyenihi A.H."/>
            <person name="Saunders W.S."/>
        </authorList>
    </citation>
    <scope>DISRUPTION PHENOTYPE</scope>
</reference>
<reference key="6">
    <citation type="journal article" date="2003" name="Mol. Biol. Cell">
        <title>Catabolite degradation of fructose-1,6-bisphosphatase in the yeast Saccharomyces cerevisiae: a genome-wide screen identifies eight novel GID genes and indicates the existence of two degradation pathways.</title>
        <authorList>
            <person name="Regelmann J."/>
            <person name="Schuele T."/>
            <person name="Josupeit F.S."/>
            <person name="Horak J."/>
            <person name="Rose M."/>
            <person name="Entian K.-D."/>
            <person name="Thumm M."/>
            <person name="Wolf D.H."/>
        </authorList>
    </citation>
    <scope>FUNCTION</scope>
    <scope>SUBCELLULAR LOCATION</scope>
    <scope>CATALYTIC ACTIVITY</scope>
    <scope>PATHWAY</scope>
</reference>
<reference key="7">
    <citation type="journal article" date="2006" name="BMC Bioinformatics">
        <title>PIPE: a protein-protein interaction prediction engine based on the re-occurring short polypeptide sequences between known interacting protein pairs.</title>
        <authorList>
            <person name="Pitre S."/>
            <person name="Dehne F."/>
            <person name="Chan A."/>
            <person name="Cheetham J."/>
            <person name="Duong A."/>
            <person name="Emili A."/>
            <person name="Gebbia M."/>
            <person name="Greenblatt J."/>
            <person name="Jessulat M."/>
            <person name="Krogan N."/>
            <person name="Luo X."/>
            <person name="Golshani A."/>
        </authorList>
    </citation>
    <scope>IDENTIFICATION IN GID COMPLEX</scope>
</reference>
<reference key="8">
    <citation type="journal article" date="2008" name="Mol. Biol. Cell">
        <title>The yeast GID complex, a novel ubiquitin ligase (E3) involved in the regulation of carbohydrate metabolism.</title>
        <authorList>
            <person name="Santt O."/>
            <person name="Pfirrmann T."/>
            <person name="Braun B."/>
            <person name="Juretschke J."/>
            <person name="Kimmig P."/>
            <person name="Scheel H."/>
            <person name="Hofmann K."/>
            <person name="Thumm M."/>
            <person name="Wolf D.H."/>
        </authorList>
    </citation>
    <scope>FUNCTION</scope>
    <scope>CATALYTIC ACTIVITY</scope>
    <scope>PATHWAY</scope>
    <scope>MUTAGENESIS OF CYS-379</scope>
</reference>
<reference key="9">
    <citation type="journal article" date="2011" name="FEBS Lett.">
        <title>Gid9, a second RING finger protein contributes to the ubiquitin ligase activity of the Gid complex required for catabolite degradation.</title>
        <authorList>
            <person name="Braun B."/>
            <person name="Pfirrmann T."/>
            <person name="Menssen R."/>
            <person name="Hofmann K."/>
            <person name="Scheel H."/>
            <person name="Wolf D.H."/>
        </authorList>
    </citation>
    <scope>INTERACTION WITH FYV10</scope>
</reference>
<reference key="10">
    <citation type="journal article" date="2012" name="J. Biol. Chem.">
        <title>Exploring the topology of the Gid complex, the E3 ubiquitin ligase involved in catabolite-induced degradation of gluconeogenic enzymes.</title>
        <authorList>
            <person name="Menssen R."/>
            <person name="Schweiggert J."/>
            <person name="Schreiner J."/>
            <person name="Kusevic D."/>
            <person name="Reuther J."/>
            <person name="Braun B."/>
            <person name="Wolf D.H."/>
        </authorList>
    </citation>
    <scope>SUBUNIT</scope>
    <scope>INTERACTION WITH GID8 AND VID28</scope>
</reference>
<reference key="11">
    <citation type="journal article" date="2017" name="Science">
        <title>An N-end rule pathway that recognizes proline and destroys gluconeogenic enzymes.</title>
        <authorList>
            <person name="Chen S.J."/>
            <person name="Wu X."/>
            <person name="Wadas B."/>
            <person name="Oh J.H."/>
            <person name="Varshavsky A."/>
        </authorList>
    </citation>
    <scope>FUNCTION</scope>
</reference>
<reference key="12">
    <citation type="journal article" date="2020" name="Mol. Cell">
        <title>Interconversion between anticipatory and active GID E3 ubiquitin ligase conformations via metabolically driven substrate receptor assembly.</title>
        <authorList>
            <person name="Qiao S."/>
            <person name="Langlois C.R."/>
            <person name="Chrustowicz J."/>
            <person name="Sherpa D."/>
            <person name="Karayel O."/>
            <person name="Hansen F.M."/>
            <person name="Beier V."/>
            <person name="von Gronau S."/>
            <person name="Bollschweiler D."/>
            <person name="Schafer T."/>
            <person name="Alpi A.F."/>
            <person name="Mann M."/>
            <person name="Prabu J.R."/>
            <person name="Schulman B.A."/>
        </authorList>
    </citation>
    <scope>SUBUNIT</scope>
</reference>
<reference evidence="18" key="13">
    <citation type="journal article" date="2021" name="Mol. Cell">
        <title>GID E3 ligase supramolecular chelate assembly configures multipronged ubiquitin targeting of an oligomeric metabolic enzyme.</title>
        <authorList>
            <person name="Sherpa D."/>
            <person name="Chrustowicz J."/>
            <person name="Qiao S."/>
            <person name="Langlois C.R."/>
            <person name="Hehl L.A."/>
            <person name="Gottemukkala K.V."/>
            <person name="Hansen F.M."/>
            <person name="Karayel O."/>
            <person name="von Gronau S."/>
            <person name="Prabu J.R."/>
            <person name="Mann M."/>
            <person name="Alpi A.F."/>
            <person name="Schulman B.A."/>
        </authorList>
    </citation>
    <scope>STRUCTURE BY ELECTRON MICROSCOPY (3.90 ANGSTROMS)</scope>
</reference>
<reference evidence="19" key="14">
    <citation type="journal article" date="2024" name="Mol. Cell">
        <title>Multisite phosphorylation dictates selective E2-E3 pairing as revealed by Ubc8/UBE2H-GID/CTLH assemblies.</title>
        <authorList>
            <person name="Chrustowicz J."/>
            <person name="Sherpa D."/>
            <person name="Li J."/>
            <person name="Langlois C.R."/>
            <person name="Papadopoulou E.C."/>
            <person name="Vu D.T."/>
            <person name="Hehl L.A."/>
            <person name="Karayel O."/>
            <person name="Beier V."/>
            <person name="von Gronau S."/>
            <person name="Muller J."/>
            <person name="Prabu J.R."/>
            <person name="Mann M."/>
            <person name="Kleiger G."/>
            <person name="Alpi A.F."/>
            <person name="Schulman B.A."/>
        </authorList>
    </citation>
    <scope>STRUCTURE BY ELECTRON MICROSCOPY (3.53 ANGSTROMS)</scope>
</reference>